<feature type="chain" id="PRO_0000277731" description="Integration host factor subunit alpha">
    <location>
        <begin position="1"/>
        <end position="99"/>
    </location>
</feature>
<feature type="region of interest" description="Disordered" evidence="2">
    <location>
        <begin position="49"/>
        <end position="73"/>
    </location>
</feature>
<organism>
    <name type="scientific">Escherichia coli O6:K15:H31 (strain 536 / UPEC)</name>
    <dbReference type="NCBI Taxonomy" id="362663"/>
    <lineage>
        <taxon>Bacteria</taxon>
        <taxon>Pseudomonadati</taxon>
        <taxon>Pseudomonadota</taxon>
        <taxon>Gammaproteobacteria</taxon>
        <taxon>Enterobacterales</taxon>
        <taxon>Enterobacteriaceae</taxon>
        <taxon>Escherichia</taxon>
    </lineage>
</organism>
<proteinExistence type="inferred from homology"/>
<reference key="1">
    <citation type="journal article" date="2006" name="Mol. Microbiol.">
        <title>Role of pathogenicity island-associated integrases in the genome plasticity of uropathogenic Escherichia coli strain 536.</title>
        <authorList>
            <person name="Hochhut B."/>
            <person name="Wilde C."/>
            <person name="Balling G."/>
            <person name="Middendorf B."/>
            <person name="Dobrindt U."/>
            <person name="Brzuszkiewicz E."/>
            <person name="Gottschalk G."/>
            <person name="Carniel E."/>
            <person name="Hacker J."/>
        </authorList>
    </citation>
    <scope>NUCLEOTIDE SEQUENCE [LARGE SCALE GENOMIC DNA]</scope>
    <source>
        <strain>536 / UPEC</strain>
    </source>
</reference>
<dbReference type="EMBL" id="CP000247">
    <property type="protein sequence ID" value="ABG69663.1"/>
    <property type="molecule type" value="Genomic_DNA"/>
</dbReference>
<dbReference type="RefSeq" id="WP_001229265.1">
    <property type="nucleotide sequence ID" value="NC_008253.1"/>
</dbReference>
<dbReference type="SMR" id="Q0THB6"/>
<dbReference type="GeneID" id="93775925"/>
<dbReference type="KEGG" id="ecp:ECP_1660"/>
<dbReference type="HOGENOM" id="CLU_105066_1_3_6"/>
<dbReference type="Proteomes" id="UP000009182">
    <property type="component" value="Chromosome"/>
</dbReference>
<dbReference type="GO" id="GO:0005829">
    <property type="term" value="C:cytosol"/>
    <property type="evidence" value="ECO:0007669"/>
    <property type="project" value="TreeGrafter"/>
</dbReference>
<dbReference type="GO" id="GO:0003677">
    <property type="term" value="F:DNA binding"/>
    <property type="evidence" value="ECO:0007669"/>
    <property type="project" value="UniProtKB-UniRule"/>
</dbReference>
<dbReference type="GO" id="GO:0030527">
    <property type="term" value="F:structural constituent of chromatin"/>
    <property type="evidence" value="ECO:0007669"/>
    <property type="project" value="InterPro"/>
</dbReference>
<dbReference type="GO" id="GO:0006310">
    <property type="term" value="P:DNA recombination"/>
    <property type="evidence" value="ECO:0007669"/>
    <property type="project" value="UniProtKB-UniRule"/>
</dbReference>
<dbReference type="GO" id="GO:0009893">
    <property type="term" value="P:positive regulation of metabolic process"/>
    <property type="evidence" value="ECO:0007669"/>
    <property type="project" value="UniProtKB-ARBA"/>
</dbReference>
<dbReference type="GO" id="GO:0006355">
    <property type="term" value="P:regulation of DNA-templated transcription"/>
    <property type="evidence" value="ECO:0007669"/>
    <property type="project" value="UniProtKB-UniRule"/>
</dbReference>
<dbReference type="GO" id="GO:0006417">
    <property type="term" value="P:regulation of translation"/>
    <property type="evidence" value="ECO:0007669"/>
    <property type="project" value="UniProtKB-UniRule"/>
</dbReference>
<dbReference type="CDD" id="cd13835">
    <property type="entry name" value="IHF_A"/>
    <property type="match status" value="1"/>
</dbReference>
<dbReference type="FunFam" id="4.10.520.10:FF:000002">
    <property type="entry name" value="Integration host factor subunit alpha"/>
    <property type="match status" value="1"/>
</dbReference>
<dbReference type="Gene3D" id="4.10.520.10">
    <property type="entry name" value="IHF-like DNA-binding proteins"/>
    <property type="match status" value="1"/>
</dbReference>
<dbReference type="HAMAP" id="MF_00380">
    <property type="entry name" value="IHF_alpha"/>
    <property type="match status" value="1"/>
</dbReference>
<dbReference type="InterPro" id="IPR000119">
    <property type="entry name" value="Hist_DNA-bd"/>
</dbReference>
<dbReference type="InterPro" id="IPR020816">
    <property type="entry name" value="Histone-like_DNA-bd_CS"/>
</dbReference>
<dbReference type="InterPro" id="IPR010992">
    <property type="entry name" value="IHF-like_DNA-bd_dom_sf"/>
</dbReference>
<dbReference type="InterPro" id="IPR005684">
    <property type="entry name" value="IHF_alpha"/>
</dbReference>
<dbReference type="NCBIfam" id="TIGR00987">
    <property type="entry name" value="himA"/>
    <property type="match status" value="1"/>
</dbReference>
<dbReference type="NCBIfam" id="NF001401">
    <property type="entry name" value="PRK00285.1"/>
    <property type="match status" value="1"/>
</dbReference>
<dbReference type="PANTHER" id="PTHR33175">
    <property type="entry name" value="DNA-BINDING PROTEIN HU"/>
    <property type="match status" value="1"/>
</dbReference>
<dbReference type="PANTHER" id="PTHR33175:SF2">
    <property type="entry name" value="INTEGRATION HOST FACTOR SUBUNIT ALPHA"/>
    <property type="match status" value="1"/>
</dbReference>
<dbReference type="Pfam" id="PF00216">
    <property type="entry name" value="Bac_DNA_binding"/>
    <property type="match status" value="1"/>
</dbReference>
<dbReference type="PRINTS" id="PR01727">
    <property type="entry name" value="DNABINDINGHU"/>
</dbReference>
<dbReference type="SMART" id="SM00411">
    <property type="entry name" value="BHL"/>
    <property type="match status" value="1"/>
</dbReference>
<dbReference type="SUPFAM" id="SSF47729">
    <property type="entry name" value="IHF-like DNA-binding proteins"/>
    <property type="match status" value="1"/>
</dbReference>
<dbReference type="PROSITE" id="PS00045">
    <property type="entry name" value="HISTONE_LIKE"/>
    <property type="match status" value="1"/>
</dbReference>
<accession>Q0THB6</accession>
<protein>
    <recommendedName>
        <fullName evidence="1">Integration host factor subunit alpha</fullName>
        <shortName evidence="1">IHF-alpha</shortName>
    </recommendedName>
</protein>
<comment type="function">
    <text evidence="1">This protein is one of the two subunits of integration host factor, a specific DNA-binding protein that functions in genetic recombination as well as in transcriptional and translational control.</text>
</comment>
<comment type="subunit">
    <text evidence="1">Heterodimer of an alpha and a beta chain.</text>
</comment>
<comment type="similarity">
    <text evidence="1">Belongs to the bacterial histone-like protein family.</text>
</comment>
<sequence>MALTKAEMSEYLFDKLGLSKRDAKELVELFFEEIRRALENGEQVKLSGFGNFDLRDKNQRPGRNPKTGEDIPITARRVVTFRPGQKLKSRVENASPKDE</sequence>
<gene>
    <name evidence="1" type="primary">ihfA</name>
    <name evidence="1" type="synonym">himA</name>
    <name type="ordered locus">ECP_1660</name>
</gene>
<evidence type="ECO:0000255" key="1">
    <source>
        <dbReference type="HAMAP-Rule" id="MF_00380"/>
    </source>
</evidence>
<evidence type="ECO:0000256" key="2">
    <source>
        <dbReference type="SAM" id="MobiDB-lite"/>
    </source>
</evidence>
<name>IHFA_ECOL5</name>
<keyword id="KW-0233">DNA recombination</keyword>
<keyword id="KW-0238">DNA-binding</keyword>
<keyword id="KW-0804">Transcription</keyword>
<keyword id="KW-0805">Transcription regulation</keyword>
<keyword id="KW-0810">Translation regulation</keyword>